<feature type="chain" id="PRO_0000391063" description="UPF0761 membrane protein VFMJ11_0098">
    <location>
        <begin position="1"/>
        <end position="310"/>
    </location>
</feature>
<feature type="transmembrane region" description="Helical" evidence="1">
    <location>
        <begin position="34"/>
        <end position="54"/>
    </location>
</feature>
<feature type="transmembrane region" description="Helical" evidence="1">
    <location>
        <begin position="97"/>
        <end position="117"/>
    </location>
</feature>
<feature type="transmembrane region" description="Helical" evidence="1">
    <location>
        <begin position="136"/>
        <end position="156"/>
    </location>
</feature>
<feature type="transmembrane region" description="Helical" evidence="1">
    <location>
        <begin position="178"/>
        <end position="198"/>
    </location>
</feature>
<feature type="transmembrane region" description="Helical" evidence="1">
    <location>
        <begin position="207"/>
        <end position="227"/>
    </location>
</feature>
<feature type="transmembrane region" description="Helical" evidence="1">
    <location>
        <begin position="242"/>
        <end position="262"/>
    </location>
</feature>
<proteinExistence type="inferred from homology"/>
<keyword id="KW-0997">Cell inner membrane</keyword>
<keyword id="KW-1003">Cell membrane</keyword>
<keyword id="KW-0472">Membrane</keyword>
<keyword id="KW-0812">Transmembrane</keyword>
<keyword id="KW-1133">Transmembrane helix</keyword>
<accession>B5FFD1</accession>
<sequence>MEDKIKHKLRIGWSYLLFLKQRVIHDRLTVSAGYMAYITLLSLVPLITVLLSVLSQFPVFSGAGDTVQAFVIQNFVPAASDAVEASLKEFISNTGKMTAVGSGFLFVASVMLISSIDRSLNYIWRVKKKRRPMYSFSLYWMILTLGPLLVGASLAATSYVTSLKIMDDEIVSSFYRTLLGWLPIILSFSAFVGLYLLVPNKKVRVTHALIGAMSAGCLFEFSKVGFAQYITQFPSYQVIYGALAAVPILFVWVYLCWIIVLIGAEITASLGEFEGWLAGKVSTNILESDIKALTEQQGLIESDSTDPESK</sequence>
<organism>
    <name type="scientific">Aliivibrio fischeri (strain MJ11)</name>
    <name type="common">Vibrio fischeri</name>
    <dbReference type="NCBI Taxonomy" id="388396"/>
    <lineage>
        <taxon>Bacteria</taxon>
        <taxon>Pseudomonadati</taxon>
        <taxon>Pseudomonadota</taxon>
        <taxon>Gammaproteobacteria</taxon>
        <taxon>Vibrionales</taxon>
        <taxon>Vibrionaceae</taxon>
        <taxon>Aliivibrio</taxon>
    </lineage>
</organism>
<protein>
    <recommendedName>
        <fullName evidence="1">UPF0761 membrane protein VFMJ11_0098</fullName>
    </recommendedName>
</protein>
<evidence type="ECO:0000255" key="1">
    <source>
        <dbReference type="HAMAP-Rule" id="MF_00672"/>
    </source>
</evidence>
<evidence type="ECO:0000305" key="2"/>
<name>Y098_ALIFM</name>
<comment type="subcellular location">
    <subcellularLocation>
        <location evidence="1">Cell inner membrane</location>
        <topology evidence="1">Multi-pass membrane protein</topology>
    </subcellularLocation>
</comment>
<comment type="similarity">
    <text evidence="1">Belongs to the UPF0761 family.</text>
</comment>
<comment type="sequence caution" evidence="2">
    <conflict type="erroneous initiation">
        <sequence resource="EMBL-CDS" id="ACH64832"/>
    </conflict>
</comment>
<reference key="1">
    <citation type="submission" date="2008-08" db="EMBL/GenBank/DDBJ databases">
        <title>Complete sequence of Vibrio fischeri strain MJ11.</title>
        <authorList>
            <person name="Mandel M.J."/>
            <person name="Stabb E.V."/>
            <person name="Ruby E.G."/>
            <person name="Ferriera S."/>
            <person name="Johnson J."/>
            <person name="Kravitz S."/>
            <person name="Beeson K."/>
            <person name="Sutton G."/>
            <person name="Rogers Y.-H."/>
            <person name="Friedman R."/>
            <person name="Frazier M."/>
            <person name="Venter J.C."/>
        </authorList>
    </citation>
    <scope>NUCLEOTIDE SEQUENCE [LARGE SCALE GENOMIC DNA]</scope>
    <source>
        <strain>MJ11</strain>
    </source>
</reference>
<gene>
    <name type="ordered locus">VFMJ11_0098</name>
</gene>
<dbReference type="EMBL" id="CP001139">
    <property type="protein sequence ID" value="ACH64832.1"/>
    <property type="status" value="ALT_INIT"/>
    <property type="molecule type" value="Genomic_DNA"/>
</dbReference>
<dbReference type="RefSeq" id="WP_026029354.1">
    <property type="nucleotide sequence ID" value="NC_011184.1"/>
</dbReference>
<dbReference type="KEGG" id="vfm:VFMJ11_0098"/>
<dbReference type="HOGENOM" id="CLU_032288_0_0_6"/>
<dbReference type="Proteomes" id="UP000001857">
    <property type="component" value="Chromosome I"/>
</dbReference>
<dbReference type="GO" id="GO:0005886">
    <property type="term" value="C:plasma membrane"/>
    <property type="evidence" value="ECO:0007669"/>
    <property type="project" value="UniProtKB-SubCell"/>
</dbReference>
<dbReference type="HAMAP" id="MF_00672">
    <property type="entry name" value="UPF0761"/>
    <property type="match status" value="1"/>
</dbReference>
<dbReference type="InterPro" id="IPR023679">
    <property type="entry name" value="UPF0761_bac"/>
</dbReference>
<dbReference type="InterPro" id="IPR017039">
    <property type="entry name" value="Virul_fac_BrkB"/>
</dbReference>
<dbReference type="NCBIfam" id="NF002457">
    <property type="entry name" value="PRK01637.1"/>
    <property type="match status" value="1"/>
</dbReference>
<dbReference type="NCBIfam" id="TIGR00765">
    <property type="entry name" value="yihY_not_rbn"/>
    <property type="match status" value="1"/>
</dbReference>
<dbReference type="PANTHER" id="PTHR30213">
    <property type="entry name" value="INNER MEMBRANE PROTEIN YHJD"/>
    <property type="match status" value="1"/>
</dbReference>
<dbReference type="PANTHER" id="PTHR30213:SF0">
    <property type="entry name" value="UPF0761 MEMBRANE PROTEIN YIHY"/>
    <property type="match status" value="1"/>
</dbReference>
<dbReference type="Pfam" id="PF03631">
    <property type="entry name" value="Virul_fac_BrkB"/>
    <property type="match status" value="1"/>
</dbReference>
<dbReference type="PIRSF" id="PIRSF035875">
    <property type="entry name" value="RNase_BN"/>
    <property type="match status" value="1"/>
</dbReference>